<gene>
    <name evidence="1" type="primary">vapC35</name>
    <name type="ordered locus">MT2012</name>
</gene>
<keyword id="KW-0378">Hydrolase</keyword>
<keyword id="KW-0460">Magnesium</keyword>
<keyword id="KW-0479">Metal-binding</keyword>
<keyword id="KW-0540">Nuclease</keyword>
<keyword id="KW-1185">Reference proteome</keyword>
<keyword id="KW-1277">Toxin-antitoxin system</keyword>
<accession>P9WF66</accession>
<accession>L0TAX9</accession>
<accession>P95252</accession>
<accession>Q7D7P4</accession>
<evidence type="ECO:0000255" key="1">
    <source>
        <dbReference type="HAMAP-Rule" id="MF_00265"/>
    </source>
</evidence>
<proteinExistence type="inferred from homology"/>
<dbReference type="EC" id="3.1.-.-" evidence="1"/>
<dbReference type="EMBL" id="AE000516">
    <property type="protein sequence ID" value="AAK46284.1"/>
    <property type="molecule type" value="Genomic_DNA"/>
</dbReference>
<dbReference type="PIR" id="F70639">
    <property type="entry name" value="F70639"/>
</dbReference>
<dbReference type="RefSeq" id="WP_003409913.1">
    <property type="nucleotide sequence ID" value="NZ_KK341227.1"/>
</dbReference>
<dbReference type="SMR" id="P9WF66"/>
<dbReference type="KEGG" id="mtc:MT2012"/>
<dbReference type="PATRIC" id="fig|83331.31.peg.2167"/>
<dbReference type="HOGENOM" id="CLU_119496_0_1_11"/>
<dbReference type="Proteomes" id="UP000001020">
    <property type="component" value="Chromosome"/>
</dbReference>
<dbReference type="GO" id="GO:0000287">
    <property type="term" value="F:magnesium ion binding"/>
    <property type="evidence" value="ECO:0007669"/>
    <property type="project" value="UniProtKB-UniRule"/>
</dbReference>
<dbReference type="GO" id="GO:0004540">
    <property type="term" value="F:RNA nuclease activity"/>
    <property type="evidence" value="ECO:0007669"/>
    <property type="project" value="InterPro"/>
</dbReference>
<dbReference type="CDD" id="cd09874">
    <property type="entry name" value="PIN_MT3492-like"/>
    <property type="match status" value="1"/>
</dbReference>
<dbReference type="Gene3D" id="3.40.50.1010">
    <property type="entry name" value="5'-nuclease"/>
    <property type="match status" value="1"/>
</dbReference>
<dbReference type="HAMAP" id="MF_00265">
    <property type="entry name" value="VapC_Nob1"/>
    <property type="match status" value="1"/>
</dbReference>
<dbReference type="InterPro" id="IPR029060">
    <property type="entry name" value="PIN-like_dom_sf"/>
</dbReference>
<dbReference type="InterPro" id="IPR002716">
    <property type="entry name" value="PIN_dom"/>
</dbReference>
<dbReference type="InterPro" id="IPR022907">
    <property type="entry name" value="VapC_family"/>
</dbReference>
<dbReference type="Pfam" id="PF01850">
    <property type="entry name" value="PIN"/>
    <property type="match status" value="1"/>
</dbReference>
<dbReference type="SUPFAM" id="SSF88723">
    <property type="entry name" value="PIN domain-like"/>
    <property type="match status" value="1"/>
</dbReference>
<sequence length="135" mass="14521">MIYLETSALVKLIRIEVESDALADWLDDRTELRWITSALTEVELSRAIRAVSPEGLPAVPSVLARLDRFEIDAVIRSTAAAYPNPALRSLDAIHLATAQTAGSVAPLTALVTYDNRLKEAAEALSLAVVAPGQAR</sequence>
<feature type="chain" id="PRO_0000428592" description="Ribonuclease VapC35">
    <location>
        <begin position="1"/>
        <end position="135"/>
    </location>
</feature>
<feature type="domain" description="PINc" evidence="1">
    <location>
        <begin position="2"/>
        <end position="123"/>
    </location>
</feature>
<feature type="binding site" evidence="1">
    <location>
        <position position="5"/>
    </location>
    <ligand>
        <name>Mg(2+)</name>
        <dbReference type="ChEBI" id="CHEBI:18420"/>
    </ligand>
</feature>
<feature type="binding site" evidence="1">
    <location>
        <position position="91"/>
    </location>
    <ligand>
        <name>Mg(2+)</name>
        <dbReference type="ChEBI" id="CHEBI:18420"/>
    </ligand>
</feature>
<reference key="1">
    <citation type="journal article" date="2002" name="J. Bacteriol.">
        <title>Whole-genome comparison of Mycobacterium tuberculosis clinical and laboratory strains.</title>
        <authorList>
            <person name="Fleischmann R.D."/>
            <person name="Alland D."/>
            <person name="Eisen J.A."/>
            <person name="Carpenter L."/>
            <person name="White O."/>
            <person name="Peterson J.D."/>
            <person name="DeBoy R.T."/>
            <person name="Dodson R.J."/>
            <person name="Gwinn M.L."/>
            <person name="Haft D.H."/>
            <person name="Hickey E.K."/>
            <person name="Kolonay J.F."/>
            <person name="Nelson W.C."/>
            <person name="Umayam L.A."/>
            <person name="Ermolaeva M.D."/>
            <person name="Salzberg S.L."/>
            <person name="Delcher A."/>
            <person name="Utterback T.R."/>
            <person name="Weidman J.F."/>
            <person name="Khouri H.M."/>
            <person name="Gill J."/>
            <person name="Mikula A."/>
            <person name="Bishai W."/>
            <person name="Jacobs W.R. Jr."/>
            <person name="Venter J.C."/>
            <person name="Fraser C.M."/>
        </authorList>
    </citation>
    <scope>NUCLEOTIDE SEQUENCE [LARGE SCALE GENOMIC DNA]</scope>
    <source>
        <strain>CDC 1551 / Oshkosh</strain>
    </source>
</reference>
<organism>
    <name type="scientific">Mycobacterium tuberculosis (strain CDC 1551 / Oshkosh)</name>
    <dbReference type="NCBI Taxonomy" id="83331"/>
    <lineage>
        <taxon>Bacteria</taxon>
        <taxon>Bacillati</taxon>
        <taxon>Actinomycetota</taxon>
        <taxon>Actinomycetes</taxon>
        <taxon>Mycobacteriales</taxon>
        <taxon>Mycobacteriaceae</taxon>
        <taxon>Mycobacterium</taxon>
        <taxon>Mycobacterium tuberculosis complex</taxon>
    </lineage>
</organism>
<comment type="function">
    <text evidence="1">Toxic component of a type II toxin-antitoxin (TA) system. An RNase. Its toxic effect is neutralized by coexpression with cognate antitoxin VapB35 (By similarity).</text>
</comment>
<comment type="cofactor">
    <cofactor evidence="1">
        <name>Mg(2+)</name>
        <dbReference type="ChEBI" id="CHEBI:18420"/>
    </cofactor>
</comment>
<comment type="similarity">
    <text evidence="1">Belongs to the PINc/VapC protein family.</text>
</comment>
<name>VPC35_MYCTO</name>
<protein>
    <recommendedName>
        <fullName evidence="1">Ribonuclease VapC35</fullName>
        <shortName evidence="1">RNase VapC35</shortName>
        <ecNumber evidence="1">3.1.-.-</ecNumber>
    </recommendedName>
    <alternativeName>
        <fullName evidence="1">Toxin VapC35</fullName>
    </alternativeName>
</protein>